<accession>P9WKE7</accession>
<accession>L0T980</accession>
<accession>P65224</accession>
<accession>Q10603</accession>
<name>KHSE_MYCTU</name>
<keyword id="KW-0028">Amino-acid biosynthesis</keyword>
<keyword id="KW-0067">ATP-binding</keyword>
<keyword id="KW-0963">Cytoplasm</keyword>
<keyword id="KW-0418">Kinase</keyword>
<keyword id="KW-0547">Nucleotide-binding</keyword>
<keyword id="KW-1185">Reference proteome</keyword>
<keyword id="KW-0791">Threonine biosynthesis</keyword>
<keyword id="KW-0808">Transferase</keyword>
<organism>
    <name type="scientific">Mycobacterium tuberculosis (strain ATCC 25618 / H37Rv)</name>
    <dbReference type="NCBI Taxonomy" id="83332"/>
    <lineage>
        <taxon>Bacteria</taxon>
        <taxon>Bacillati</taxon>
        <taxon>Actinomycetota</taxon>
        <taxon>Actinomycetes</taxon>
        <taxon>Mycobacteriales</taxon>
        <taxon>Mycobacteriaceae</taxon>
        <taxon>Mycobacterium</taxon>
        <taxon>Mycobacterium tuberculosis complex</taxon>
    </lineage>
</organism>
<comment type="function">
    <text evidence="1">Catalyzes the ATP-dependent phosphorylation of L-homoserine to L-homoserine phosphate.</text>
</comment>
<comment type="catalytic activity">
    <reaction evidence="1">
        <text>L-homoserine + ATP = O-phospho-L-homoserine + ADP + H(+)</text>
        <dbReference type="Rhea" id="RHEA:13985"/>
        <dbReference type="ChEBI" id="CHEBI:15378"/>
        <dbReference type="ChEBI" id="CHEBI:30616"/>
        <dbReference type="ChEBI" id="CHEBI:57476"/>
        <dbReference type="ChEBI" id="CHEBI:57590"/>
        <dbReference type="ChEBI" id="CHEBI:456216"/>
        <dbReference type="EC" id="2.7.1.39"/>
    </reaction>
</comment>
<comment type="pathway">
    <text evidence="1">Amino-acid biosynthesis; L-threonine biosynthesis; L-threonine from L-aspartate: step 4/5.</text>
</comment>
<comment type="subcellular location">
    <subcellularLocation>
        <location evidence="1">Cytoplasm</location>
    </subcellularLocation>
</comment>
<comment type="miscellaneous">
    <text>Was identified as a high-confidence drug target.</text>
</comment>
<comment type="similarity">
    <text evidence="1">Belongs to the GHMP kinase family. Homoserine kinase subfamily.</text>
</comment>
<protein>
    <recommendedName>
        <fullName evidence="1">Homoserine kinase</fullName>
        <shortName evidence="1">HK</shortName>
        <shortName evidence="1">HSK</shortName>
        <ecNumber evidence="1">2.7.1.39</ecNumber>
    </recommendedName>
</protein>
<evidence type="ECO:0000255" key="1">
    <source>
        <dbReference type="HAMAP-Rule" id="MF_00384"/>
    </source>
</evidence>
<gene>
    <name evidence="1" type="primary">thrB</name>
    <name type="ordered locus">Rv1296</name>
    <name type="ORF">MTCY373.16</name>
</gene>
<proteinExistence type="evidence at protein level"/>
<sequence>MVTQALLPSGLVASAVVAASSANLGPGFDSVGLALSLYDEIIVETTDSGLTVTVDGEGGDQVPLGPEHLVVRAVQHGLQAAGVSAAGLAVRCRNAIPHSRGLGSSAAAVVGGLAAVNGLVVQTDSSPSSDAELIQLASEFEGHPDNAAAAVLGGAVVSWTDHSGDRPNYSAVSLRLHPDIRLFTAIPEQRSSTAETRVLLPAQVSHDDARFNVSRAALLVVALTERPDLLMAATEDLLHQPQRAAAMTASAEYLRLLRRHNVAAALSGAGPSLIALSTDSELPTDAVEFGAAKGFAVTELTVGEAVRWSPTVRVPG</sequence>
<dbReference type="EC" id="2.7.1.39" evidence="1"/>
<dbReference type="EMBL" id="AL123456">
    <property type="protein sequence ID" value="CCP44053.1"/>
    <property type="molecule type" value="Genomic_DNA"/>
</dbReference>
<dbReference type="PIR" id="D70773">
    <property type="entry name" value="D70773"/>
</dbReference>
<dbReference type="RefSeq" id="NP_215812.1">
    <property type="nucleotide sequence ID" value="NC_000962.3"/>
</dbReference>
<dbReference type="RefSeq" id="WP_003406654.1">
    <property type="nucleotide sequence ID" value="NZ_NVQJ01000030.1"/>
</dbReference>
<dbReference type="SMR" id="P9WKE7"/>
<dbReference type="FunCoup" id="P9WKE7">
    <property type="interactions" value="314"/>
</dbReference>
<dbReference type="STRING" id="83332.Rv1296"/>
<dbReference type="PaxDb" id="83332-Rv1296"/>
<dbReference type="DNASU" id="886958"/>
<dbReference type="GeneID" id="45425270"/>
<dbReference type="GeneID" id="886958"/>
<dbReference type="KEGG" id="mtu:Rv1296"/>
<dbReference type="KEGG" id="mtv:RVBD_1296"/>
<dbReference type="TubercuList" id="Rv1296"/>
<dbReference type="eggNOG" id="COG0083">
    <property type="taxonomic scope" value="Bacteria"/>
</dbReference>
<dbReference type="InParanoid" id="P9WKE7"/>
<dbReference type="OrthoDB" id="9769912at2"/>
<dbReference type="PhylomeDB" id="P9WKE7"/>
<dbReference type="UniPathway" id="UPA00050">
    <property type="reaction ID" value="UER00064"/>
</dbReference>
<dbReference type="Proteomes" id="UP000001584">
    <property type="component" value="Chromosome"/>
</dbReference>
<dbReference type="GO" id="GO:0005737">
    <property type="term" value="C:cytoplasm"/>
    <property type="evidence" value="ECO:0007669"/>
    <property type="project" value="UniProtKB-SubCell"/>
</dbReference>
<dbReference type="GO" id="GO:0005524">
    <property type="term" value="F:ATP binding"/>
    <property type="evidence" value="ECO:0007669"/>
    <property type="project" value="UniProtKB-UniRule"/>
</dbReference>
<dbReference type="GO" id="GO:0004413">
    <property type="term" value="F:homoserine kinase activity"/>
    <property type="evidence" value="ECO:0007669"/>
    <property type="project" value="UniProtKB-UniRule"/>
</dbReference>
<dbReference type="GO" id="GO:0009088">
    <property type="term" value="P:threonine biosynthetic process"/>
    <property type="evidence" value="ECO:0007669"/>
    <property type="project" value="UniProtKB-UniRule"/>
</dbReference>
<dbReference type="Gene3D" id="3.30.230.10">
    <property type="match status" value="1"/>
</dbReference>
<dbReference type="Gene3D" id="3.30.70.890">
    <property type="entry name" value="GHMP kinase, C-terminal domain"/>
    <property type="match status" value="1"/>
</dbReference>
<dbReference type="HAMAP" id="MF_00384">
    <property type="entry name" value="Homoser_kinase"/>
    <property type="match status" value="1"/>
</dbReference>
<dbReference type="InterPro" id="IPR013750">
    <property type="entry name" value="GHMP_kinase_C_dom"/>
</dbReference>
<dbReference type="InterPro" id="IPR036554">
    <property type="entry name" value="GHMP_kinase_C_sf"/>
</dbReference>
<dbReference type="InterPro" id="IPR006204">
    <property type="entry name" value="GHMP_kinase_N_dom"/>
</dbReference>
<dbReference type="InterPro" id="IPR006203">
    <property type="entry name" value="GHMP_knse_ATP-bd_CS"/>
</dbReference>
<dbReference type="InterPro" id="IPR000870">
    <property type="entry name" value="Homoserine_kinase"/>
</dbReference>
<dbReference type="InterPro" id="IPR020568">
    <property type="entry name" value="Ribosomal_Su5_D2-typ_SF"/>
</dbReference>
<dbReference type="InterPro" id="IPR014721">
    <property type="entry name" value="Ribsml_uS5_D2-typ_fold_subgr"/>
</dbReference>
<dbReference type="NCBIfam" id="TIGR00191">
    <property type="entry name" value="thrB"/>
    <property type="match status" value="1"/>
</dbReference>
<dbReference type="PANTHER" id="PTHR20861:SF1">
    <property type="entry name" value="HOMOSERINE KINASE"/>
    <property type="match status" value="1"/>
</dbReference>
<dbReference type="PANTHER" id="PTHR20861">
    <property type="entry name" value="HOMOSERINE/4-DIPHOSPHOCYTIDYL-2-C-METHYL-D-ERYTHRITOL KINASE"/>
    <property type="match status" value="1"/>
</dbReference>
<dbReference type="Pfam" id="PF08544">
    <property type="entry name" value="GHMP_kinases_C"/>
    <property type="match status" value="1"/>
</dbReference>
<dbReference type="Pfam" id="PF00288">
    <property type="entry name" value="GHMP_kinases_N"/>
    <property type="match status" value="1"/>
</dbReference>
<dbReference type="PIRSF" id="PIRSF000676">
    <property type="entry name" value="Homoser_kin"/>
    <property type="match status" value="1"/>
</dbReference>
<dbReference type="PRINTS" id="PR00958">
    <property type="entry name" value="HOMSERKINASE"/>
</dbReference>
<dbReference type="SUPFAM" id="SSF55060">
    <property type="entry name" value="GHMP Kinase, C-terminal domain"/>
    <property type="match status" value="1"/>
</dbReference>
<dbReference type="SUPFAM" id="SSF54211">
    <property type="entry name" value="Ribosomal protein S5 domain 2-like"/>
    <property type="match status" value="1"/>
</dbReference>
<dbReference type="PROSITE" id="PS00627">
    <property type="entry name" value="GHMP_KINASES_ATP"/>
    <property type="match status" value="1"/>
</dbReference>
<reference key="1">
    <citation type="journal article" date="1998" name="Nature">
        <title>Deciphering the biology of Mycobacterium tuberculosis from the complete genome sequence.</title>
        <authorList>
            <person name="Cole S.T."/>
            <person name="Brosch R."/>
            <person name="Parkhill J."/>
            <person name="Garnier T."/>
            <person name="Churcher C.M."/>
            <person name="Harris D.E."/>
            <person name="Gordon S.V."/>
            <person name="Eiglmeier K."/>
            <person name="Gas S."/>
            <person name="Barry C.E. III"/>
            <person name="Tekaia F."/>
            <person name="Badcock K."/>
            <person name="Basham D."/>
            <person name="Brown D."/>
            <person name="Chillingworth T."/>
            <person name="Connor R."/>
            <person name="Davies R.M."/>
            <person name="Devlin K."/>
            <person name="Feltwell T."/>
            <person name="Gentles S."/>
            <person name="Hamlin N."/>
            <person name="Holroyd S."/>
            <person name="Hornsby T."/>
            <person name="Jagels K."/>
            <person name="Krogh A."/>
            <person name="McLean J."/>
            <person name="Moule S."/>
            <person name="Murphy L.D."/>
            <person name="Oliver S."/>
            <person name="Osborne J."/>
            <person name="Quail M.A."/>
            <person name="Rajandream M.A."/>
            <person name="Rogers J."/>
            <person name="Rutter S."/>
            <person name="Seeger K."/>
            <person name="Skelton S."/>
            <person name="Squares S."/>
            <person name="Squares R."/>
            <person name="Sulston J.E."/>
            <person name="Taylor K."/>
            <person name="Whitehead S."/>
            <person name="Barrell B.G."/>
        </authorList>
    </citation>
    <scope>NUCLEOTIDE SEQUENCE [LARGE SCALE GENOMIC DNA]</scope>
    <source>
        <strain>ATCC 25618 / H37Rv</strain>
    </source>
</reference>
<reference key="2">
    <citation type="journal article" date="2008" name="BMC Syst. Biol.">
        <title>targetTB: a target identification pipeline for Mycobacterium tuberculosis through an interactome, reactome and genome-scale structural analysis.</title>
        <authorList>
            <person name="Raman K."/>
            <person name="Yeturu K."/>
            <person name="Chandra N."/>
        </authorList>
    </citation>
    <scope>IDENTIFICATION AS A DRUG TARGET [LARGE SCALE ANALYSIS]</scope>
</reference>
<reference key="3">
    <citation type="journal article" date="2011" name="Mol. Cell. Proteomics">
        <title>Proteogenomic analysis of Mycobacterium tuberculosis by high resolution mass spectrometry.</title>
        <authorList>
            <person name="Kelkar D.S."/>
            <person name="Kumar D."/>
            <person name="Kumar P."/>
            <person name="Balakrishnan L."/>
            <person name="Muthusamy B."/>
            <person name="Yadav A.K."/>
            <person name="Shrivastava P."/>
            <person name="Marimuthu A."/>
            <person name="Anand S."/>
            <person name="Sundaram H."/>
            <person name="Kingsbury R."/>
            <person name="Harsha H.C."/>
            <person name="Nair B."/>
            <person name="Prasad T.S."/>
            <person name="Chauhan D.S."/>
            <person name="Katoch K."/>
            <person name="Katoch V.M."/>
            <person name="Kumar P."/>
            <person name="Chaerkady R."/>
            <person name="Ramachandran S."/>
            <person name="Dash D."/>
            <person name="Pandey A."/>
        </authorList>
    </citation>
    <scope>IDENTIFICATION BY MASS SPECTROMETRY [LARGE SCALE ANALYSIS]</scope>
    <source>
        <strain>ATCC 25618 / H37Rv</strain>
    </source>
</reference>
<feature type="chain" id="PRO_0000156590" description="Homoserine kinase">
    <location>
        <begin position="1"/>
        <end position="316"/>
    </location>
</feature>
<feature type="binding site" evidence="1">
    <location>
        <begin position="97"/>
        <end position="107"/>
    </location>
    <ligand>
        <name>ATP</name>
        <dbReference type="ChEBI" id="CHEBI:30616"/>
    </ligand>
</feature>